<accession>P0CN31</accession>
<accession>O42671</accession>
<accession>O42672</accession>
<accession>Q55IA3</accession>
<accession>Q5K7T9</accession>
<reference key="1">
    <citation type="journal article" date="1997" name="Fungal Genet. Biol.">
        <title>Cloning and molecular characterization of CnTEF1 which encodes translation elongation factor 1alpha in Cryptococcus neoformans.</title>
        <authorList>
            <person name="Thornewell S.J."/>
            <person name="Peery R.B."/>
            <person name="Skatrud P.L."/>
        </authorList>
    </citation>
    <scope>NUCLEOTIDE SEQUENCE [MRNA]</scope>
    <source>
        <strain>B-3501</strain>
        <strain>M1-106</strain>
    </source>
</reference>
<reference key="2">
    <citation type="journal article" date="2005" name="Science">
        <title>The genome of the basidiomycetous yeast and human pathogen Cryptococcus neoformans.</title>
        <authorList>
            <person name="Loftus B.J."/>
            <person name="Fung E."/>
            <person name="Roncaglia P."/>
            <person name="Rowley D."/>
            <person name="Amedeo P."/>
            <person name="Bruno D."/>
            <person name="Vamathevan J."/>
            <person name="Miranda M."/>
            <person name="Anderson I.J."/>
            <person name="Fraser J.A."/>
            <person name="Allen J.E."/>
            <person name="Bosdet I.E."/>
            <person name="Brent M.R."/>
            <person name="Chiu R."/>
            <person name="Doering T.L."/>
            <person name="Donlin M.J."/>
            <person name="D'Souza C.A."/>
            <person name="Fox D.S."/>
            <person name="Grinberg V."/>
            <person name="Fu J."/>
            <person name="Fukushima M."/>
            <person name="Haas B.J."/>
            <person name="Huang J.C."/>
            <person name="Janbon G."/>
            <person name="Jones S.J.M."/>
            <person name="Koo H.L."/>
            <person name="Krzywinski M.I."/>
            <person name="Kwon-Chung K.J."/>
            <person name="Lengeler K.B."/>
            <person name="Maiti R."/>
            <person name="Marra M.A."/>
            <person name="Marra R.E."/>
            <person name="Mathewson C.A."/>
            <person name="Mitchell T.G."/>
            <person name="Pertea M."/>
            <person name="Riggs F.R."/>
            <person name="Salzberg S.L."/>
            <person name="Schein J.E."/>
            <person name="Shvartsbeyn A."/>
            <person name="Shin H."/>
            <person name="Shumway M."/>
            <person name="Specht C.A."/>
            <person name="Suh B.B."/>
            <person name="Tenney A."/>
            <person name="Utterback T.R."/>
            <person name="Wickes B.L."/>
            <person name="Wortman J.R."/>
            <person name="Wye N.H."/>
            <person name="Kronstad J.W."/>
            <person name="Lodge J.K."/>
            <person name="Heitman J."/>
            <person name="Davis R.W."/>
            <person name="Fraser C.M."/>
            <person name="Hyman R.W."/>
        </authorList>
    </citation>
    <scope>NUCLEOTIDE SEQUENCE [LARGE SCALE GENOMIC DNA]</scope>
    <source>
        <strain>B-3501A</strain>
    </source>
</reference>
<keyword id="KW-0963">Cytoplasm</keyword>
<keyword id="KW-0251">Elongation factor</keyword>
<keyword id="KW-0342">GTP-binding</keyword>
<keyword id="KW-0488">Methylation</keyword>
<keyword id="KW-0547">Nucleotide-binding</keyword>
<keyword id="KW-0648">Protein biosynthesis</keyword>
<gene>
    <name type="primary">TEF1</name>
    <name type="ordered locus">CNBM1160</name>
</gene>
<evidence type="ECO:0000250" key="1"/>
<evidence type="ECO:0000250" key="2">
    <source>
        <dbReference type="UniProtKB" id="P02994"/>
    </source>
</evidence>
<evidence type="ECO:0000305" key="3"/>
<dbReference type="EMBL" id="U81803">
    <property type="protein sequence ID" value="AAB88083.1"/>
    <property type="molecule type" value="mRNA"/>
</dbReference>
<dbReference type="EMBL" id="U81804">
    <property type="protein sequence ID" value="AAB88586.1"/>
    <property type="molecule type" value="Genomic_DNA"/>
</dbReference>
<dbReference type="EMBL" id="AAEY01000062">
    <property type="protein sequence ID" value="EAL17550.1"/>
    <property type="molecule type" value="Genomic_DNA"/>
</dbReference>
<dbReference type="RefSeq" id="XP_772197.1">
    <property type="nucleotide sequence ID" value="XM_767104.1"/>
</dbReference>
<dbReference type="SMR" id="P0CN31"/>
<dbReference type="EnsemblFungi" id="AAW46945">
    <property type="protein sequence ID" value="AAW46945"/>
    <property type="gene ID" value="CNM01300"/>
</dbReference>
<dbReference type="GeneID" id="4939476"/>
<dbReference type="KEGG" id="cnb:CNBM1160"/>
<dbReference type="VEuPathDB" id="FungiDB:CNBM1160"/>
<dbReference type="HOGENOM" id="CLU_007265_3_5_1"/>
<dbReference type="OrthoDB" id="529at5206"/>
<dbReference type="GO" id="GO:0005737">
    <property type="term" value="C:cytoplasm"/>
    <property type="evidence" value="ECO:0007669"/>
    <property type="project" value="UniProtKB-SubCell"/>
</dbReference>
<dbReference type="GO" id="GO:0005525">
    <property type="term" value="F:GTP binding"/>
    <property type="evidence" value="ECO:0007669"/>
    <property type="project" value="UniProtKB-KW"/>
</dbReference>
<dbReference type="GO" id="GO:0003924">
    <property type="term" value="F:GTPase activity"/>
    <property type="evidence" value="ECO:0007669"/>
    <property type="project" value="InterPro"/>
</dbReference>
<dbReference type="GO" id="GO:0003746">
    <property type="term" value="F:translation elongation factor activity"/>
    <property type="evidence" value="ECO:0007669"/>
    <property type="project" value="UniProtKB-KW"/>
</dbReference>
<dbReference type="CDD" id="cd01883">
    <property type="entry name" value="EF1_alpha"/>
    <property type="match status" value="1"/>
</dbReference>
<dbReference type="CDD" id="cd03693">
    <property type="entry name" value="EF1_alpha_II"/>
    <property type="match status" value="1"/>
</dbReference>
<dbReference type="CDD" id="cd03705">
    <property type="entry name" value="EF1_alpha_III"/>
    <property type="match status" value="1"/>
</dbReference>
<dbReference type="FunFam" id="2.40.30.10:FF:000003">
    <property type="entry name" value="Elongation factor 1-alpha"/>
    <property type="match status" value="1"/>
</dbReference>
<dbReference type="FunFam" id="2.40.30.10:FF:000005">
    <property type="entry name" value="Elongation factor 1-alpha"/>
    <property type="match status" value="1"/>
</dbReference>
<dbReference type="FunFam" id="3.40.50.300:FF:000211">
    <property type="entry name" value="Elongation factor 1-alpha"/>
    <property type="match status" value="1"/>
</dbReference>
<dbReference type="Gene3D" id="3.40.50.300">
    <property type="entry name" value="P-loop containing nucleotide triphosphate hydrolases"/>
    <property type="match status" value="1"/>
</dbReference>
<dbReference type="Gene3D" id="2.40.30.10">
    <property type="entry name" value="Translation factors"/>
    <property type="match status" value="2"/>
</dbReference>
<dbReference type="HAMAP" id="MF_00118_A">
    <property type="entry name" value="EF_Tu_A"/>
    <property type="match status" value="1"/>
</dbReference>
<dbReference type="InterPro" id="IPR004161">
    <property type="entry name" value="EFTu-like_2"/>
</dbReference>
<dbReference type="InterPro" id="IPR031157">
    <property type="entry name" value="G_TR_CS"/>
</dbReference>
<dbReference type="InterPro" id="IPR054696">
    <property type="entry name" value="GTP-eEF1A_C"/>
</dbReference>
<dbReference type="InterPro" id="IPR027417">
    <property type="entry name" value="P-loop_NTPase"/>
</dbReference>
<dbReference type="InterPro" id="IPR000795">
    <property type="entry name" value="T_Tr_GTP-bd_dom"/>
</dbReference>
<dbReference type="InterPro" id="IPR050100">
    <property type="entry name" value="TRAFAC_GTPase_members"/>
</dbReference>
<dbReference type="InterPro" id="IPR009000">
    <property type="entry name" value="Transl_B-barrel_sf"/>
</dbReference>
<dbReference type="InterPro" id="IPR009001">
    <property type="entry name" value="Transl_elong_EF1A/Init_IF2_C"/>
</dbReference>
<dbReference type="InterPro" id="IPR004539">
    <property type="entry name" value="Transl_elong_EF1A_euk/arc"/>
</dbReference>
<dbReference type="NCBIfam" id="TIGR00483">
    <property type="entry name" value="EF-1_alpha"/>
    <property type="match status" value="1"/>
</dbReference>
<dbReference type="NCBIfam" id="NF008969">
    <property type="entry name" value="PRK12317.1"/>
    <property type="match status" value="1"/>
</dbReference>
<dbReference type="PANTHER" id="PTHR23115">
    <property type="entry name" value="TRANSLATION FACTOR"/>
    <property type="match status" value="1"/>
</dbReference>
<dbReference type="Pfam" id="PF22594">
    <property type="entry name" value="GTP-eEF1A_C"/>
    <property type="match status" value="1"/>
</dbReference>
<dbReference type="Pfam" id="PF00009">
    <property type="entry name" value="GTP_EFTU"/>
    <property type="match status" value="1"/>
</dbReference>
<dbReference type="Pfam" id="PF03144">
    <property type="entry name" value="GTP_EFTU_D2"/>
    <property type="match status" value="1"/>
</dbReference>
<dbReference type="PRINTS" id="PR00315">
    <property type="entry name" value="ELONGATNFCT"/>
</dbReference>
<dbReference type="SUPFAM" id="SSF50465">
    <property type="entry name" value="EF-Tu/eEF-1alpha/eIF2-gamma C-terminal domain"/>
    <property type="match status" value="1"/>
</dbReference>
<dbReference type="SUPFAM" id="SSF52540">
    <property type="entry name" value="P-loop containing nucleoside triphosphate hydrolases"/>
    <property type="match status" value="1"/>
</dbReference>
<dbReference type="SUPFAM" id="SSF50447">
    <property type="entry name" value="Translation proteins"/>
    <property type="match status" value="1"/>
</dbReference>
<dbReference type="PROSITE" id="PS00301">
    <property type="entry name" value="G_TR_1"/>
    <property type="match status" value="1"/>
</dbReference>
<dbReference type="PROSITE" id="PS51722">
    <property type="entry name" value="G_TR_2"/>
    <property type="match status" value="1"/>
</dbReference>
<proteinExistence type="evidence at transcript level"/>
<protein>
    <recommendedName>
        <fullName>Elongation factor 1-alpha</fullName>
        <shortName>EF-1-alpha</shortName>
    </recommendedName>
</protein>
<organism>
    <name type="scientific">Cryptococcus neoformans var. neoformans serotype D (strain B-3501A)</name>
    <name type="common">Filobasidiella neoformans</name>
    <dbReference type="NCBI Taxonomy" id="283643"/>
    <lineage>
        <taxon>Eukaryota</taxon>
        <taxon>Fungi</taxon>
        <taxon>Dikarya</taxon>
        <taxon>Basidiomycota</taxon>
        <taxon>Agaricomycotina</taxon>
        <taxon>Tremellomycetes</taxon>
        <taxon>Tremellales</taxon>
        <taxon>Cryptococcaceae</taxon>
        <taxon>Cryptococcus</taxon>
        <taxon>Cryptococcus neoformans species complex</taxon>
    </lineage>
</organism>
<comment type="function">
    <text evidence="1">This protein promotes the GTP-dependent binding of aminoacyl-tRNA to the A-site of ribosomes during protein biosynthesis.</text>
</comment>
<comment type="subcellular location">
    <subcellularLocation>
        <location>Cytoplasm</location>
    </subcellularLocation>
</comment>
<comment type="similarity">
    <text evidence="3">Belongs to the TRAFAC class translation factor GTPase superfamily. Classic translation factor GTPase family. EF-Tu/EF-1A subfamily.</text>
</comment>
<feature type="initiator methionine" description="Removed" evidence="2">
    <location>
        <position position="1"/>
    </location>
</feature>
<feature type="chain" id="PRO_0000410069" description="Elongation factor 1-alpha">
    <location>
        <begin position="2"/>
        <end position="459"/>
    </location>
</feature>
<feature type="domain" description="tr-type G">
    <location>
        <begin position="5"/>
        <end position="240"/>
    </location>
</feature>
<feature type="region of interest" description="G1" evidence="1">
    <location>
        <begin position="14"/>
        <end position="21"/>
    </location>
</feature>
<feature type="region of interest" description="G2" evidence="1">
    <location>
        <begin position="70"/>
        <end position="74"/>
    </location>
</feature>
<feature type="region of interest" description="G3" evidence="1">
    <location>
        <begin position="91"/>
        <end position="94"/>
    </location>
</feature>
<feature type="region of interest" description="G4" evidence="1">
    <location>
        <begin position="153"/>
        <end position="156"/>
    </location>
</feature>
<feature type="region of interest" description="G5" evidence="1">
    <location>
        <begin position="192"/>
        <end position="194"/>
    </location>
</feature>
<feature type="binding site" evidence="1">
    <location>
        <begin position="14"/>
        <end position="21"/>
    </location>
    <ligand>
        <name>GTP</name>
        <dbReference type="ChEBI" id="CHEBI:37565"/>
    </ligand>
</feature>
<feature type="binding site" evidence="1">
    <location>
        <begin position="91"/>
        <end position="95"/>
    </location>
    <ligand>
        <name>GTP</name>
        <dbReference type="ChEBI" id="CHEBI:37565"/>
    </ligand>
</feature>
<feature type="binding site" evidence="1">
    <location>
        <begin position="153"/>
        <end position="156"/>
    </location>
    <ligand>
        <name>GTP</name>
        <dbReference type="ChEBI" id="CHEBI:37565"/>
    </ligand>
</feature>
<feature type="modified residue" description="N,N,N-trimethylglycine" evidence="2">
    <location>
        <position position="2"/>
    </location>
</feature>
<feature type="modified residue" description="N6,N6-dimethyllysine; alternate" evidence="2">
    <location>
        <position position="3"/>
    </location>
</feature>
<feature type="modified residue" description="N6-methyllysine; alternate" evidence="2">
    <location>
        <position position="3"/>
    </location>
</feature>
<feature type="modified residue" description="N6-methyllysine" evidence="2">
    <location>
        <position position="30"/>
    </location>
</feature>
<feature type="modified residue" description="N6,N6,N6-trimethyllysine" evidence="2">
    <location>
        <position position="79"/>
    </location>
</feature>
<feature type="modified residue" description="N6,N6-dimethyllysine; alternate" evidence="2">
    <location>
        <position position="316"/>
    </location>
</feature>
<feature type="modified residue" description="N6-methyllysine; alternate" evidence="2">
    <location>
        <position position="316"/>
    </location>
</feature>
<feature type="modified residue" description="N6-methyllysine" evidence="2">
    <location>
        <position position="390"/>
    </location>
</feature>
<feature type="sequence variant" description="In strain: M1-106.">
    <original>R</original>
    <variation>K</variation>
    <location>
        <position position="84"/>
    </location>
</feature>
<feature type="sequence variant" description="In strain: B-3501.">
    <original>K</original>
    <variation>R</variation>
    <location>
        <position position="222"/>
    </location>
</feature>
<feature type="sequence variant" description="In strain: B-3501.">
    <original>D</original>
    <variation>S</variation>
    <location>
        <position position="231"/>
    </location>
</feature>
<feature type="sequence variant" description="In strain: B-3501 and M1-106.">
    <original>IE</original>
    <variation>SR</variation>
    <location>
        <begin position="233"/>
        <end position="234"/>
    </location>
</feature>
<feature type="sequence variant" description="In strain: B-3501.">
    <original>P</original>
    <variation>H</variation>
    <location>
        <position position="236"/>
    </location>
</feature>
<feature type="sequence variant" description="In strain: M1-106.">
    <original>A</original>
    <variation>S</variation>
    <location>
        <position position="371"/>
    </location>
</feature>
<feature type="sequence variant" description="In strain: M1-106.">
    <original>A</original>
    <variation>S</variation>
    <location>
        <position position="404"/>
    </location>
</feature>
<feature type="sequence variant" description="In strain: M1-106.">
    <original>DKTEKG</original>
    <variation>EKSDGKS</variation>
    <location>
        <begin position="440"/>
        <end position="445"/>
    </location>
</feature>
<name>EF1A_CRYNB</name>
<sequence>MGKDKLHVNVVVIGHVDSGKSTTTGHLIYKCGGIDKRTIEKFEKEAQELGKSSFKYAWVLDKLKAERERGITIDIALWKFETPRYQVTVIDAPGHRDFIKNMITGTSQADCAILIIATGIGEFEAGISKDGQTREHALLAFTLGVRQLIVACNKMDTCKWSEDRFNEIVKETNGFIKKVGYNPKAVPFVPISGWHGDNMLEETTNMPWYKGWTKETKSGVSKGKTLLEAIDAIEPPTRPTDKPLRLPLQDVYKIGGIGTVPVGRVETGVIKAGMVVKFAPTNVTTEVKSVEMHHEQIPEGLPGDNVGFNVKNVSIKDIRRGNVCGDSKNDPPMEAASFNAQVIVLNHPGQIGAGYTPVLDCHTAHIACKFAELIEKIDRRTGKVMEAAPKFVKSGDAAIVKLVAQKPLCVETYADYPPLGRFAVRDMRQTVAVGVIKSVDKTEKGGKVTKAAEKAAKKK</sequence>